<comment type="function">
    <text evidence="2 3 4 5">Positively regulates the expression of catA, catBCIJFD and benPK in response to cis,cis-muconate. It binds to the catB-catM intercistronic region, to a specific sequence upstream of catA and to the benPK promoter region. Can also repress pca genes.</text>
</comment>
<comment type="subunit">
    <text evidence="2 4">Homotetramer in solution.</text>
</comment>
<comment type="induction">
    <text>Negatively autoregulated.</text>
</comment>
<comment type="similarity">
    <text evidence="6">Belongs to the LysR transcriptional regulatory family.</text>
</comment>
<comment type="caution">
    <text evidence="7">Was originally (PubMed:2793826) reported to be a transcriptional repressor of cat genes. However, further investigations have shown it to be a transcriptional activator.</text>
</comment>
<name>CATM_ACIAD</name>
<dbReference type="EMBL" id="AF009224">
    <property type="protein sequence ID" value="AAC46429.1"/>
    <property type="molecule type" value="Genomic_DNA"/>
</dbReference>
<dbReference type="EMBL" id="CR543861">
    <property type="protein sequence ID" value="CAG68308.1"/>
    <property type="molecule type" value="Genomic_DNA"/>
</dbReference>
<dbReference type="RefSeq" id="WP_004925462.1">
    <property type="nucleotide sequence ID" value="NC_005966.1"/>
</dbReference>
<dbReference type="PDB" id="2F7B">
    <property type="method" value="X-ray"/>
    <property type="resolution" value="1.90 A"/>
    <property type="chains" value="A=81-303"/>
</dbReference>
<dbReference type="PDB" id="2F7C">
    <property type="method" value="X-ray"/>
    <property type="resolution" value="2.16 A"/>
    <property type="chains" value="A=81-303"/>
</dbReference>
<dbReference type="PDB" id="2H98">
    <property type="method" value="X-ray"/>
    <property type="resolution" value="1.80 A"/>
    <property type="chains" value="A/B=1-303"/>
</dbReference>
<dbReference type="PDB" id="3GLB">
    <property type="method" value="X-ray"/>
    <property type="resolution" value="2.80 A"/>
    <property type="chains" value="A/B/C/D=89-303"/>
</dbReference>
<dbReference type="PDBsum" id="2F7B"/>
<dbReference type="PDBsum" id="2F7C"/>
<dbReference type="PDBsum" id="2H98"/>
<dbReference type="PDBsum" id="3GLB"/>
<dbReference type="SMR" id="P07774"/>
<dbReference type="STRING" id="202950.GCA_001485005_01199"/>
<dbReference type="GeneID" id="45233857"/>
<dbReference type="KEGG" id="aci:ACIAD1445"/>
<dbReference type="eggNOG" id="COG0583">
    <property type="taxonomic scope" value="Bacteria"/>
</dbReference>
<dbReference type="HOGENOM" id="CLU_039613_6_4_6"/>
<dbReference type="OrthoDB" id="5289754at2"/>
<dbReference type="BioCyc" id="ASP62977:ACIAD_RS06675-MONOMER"/>
<dbReference type="EvolutionaryTrace" id="P07774"/>
<dbReference type="Proteomes" id="UP000000430">
    <property type="component" value="Chromosome"/>
</dbReference>
<dbReference type="GO" id="GO:0032993">
    <property type="term" value="C:protein-DNA complex"/>
    <property type="evidence" value="ECO:0007669"/>
    <property type="project" value="TreeGrafter"/>
</dbReference>
<dbReference type="GO" id="GO:0003677">
    <property type="term" value="F:DNA binding"/>
    <property type="evidence" value="ECO:0007669"/>
    <property type="project" value="UniProtKB-KW"/>
</dbReference>
<dbReference type="GO" id="GO:0003700">
    <property type="term" value="F:DNA-binding transcription factor activity"/>
    <property type="evidence" value="ECO:0007669"/>
    <property type="project" value="InterPro"/>
</dbReference>
<dbReference type="GO" id="GO:0009056">
    <property type="term" value="P:catabolic process"/>
    <property type="evidence" value="ECO:0007669"/>
    <property type="project" value="UniProtKB-KW"/>
</dbReference>
<dbReference type="CDD" id="cd08445">
    <property type="entry name" value="PBP2_BenM_CatM_CatR"/>
    <property type="match status" value="1"/>
</dbReference>
<dbReference type="FunFam" id="1.10.10.10:FF:000001">
    <property type="entry name" value="LysR family transcriptional regulator"/>
    <property type="match status" value="1"/>
</dbReference>
<dbReference type="Gene3D" id="3.40.190.10">
    <property type="entry name" value="Periplasmic binding protein-like II"/>
    <property type="match status" value="2"/>
</dbReference>
<dbReference type="Gene3D" id="1.10.10.10">
    <property type="entry name" value="Winged helix-like DNA-binding domain superfamily/Winged helix DNA-binding domain"/>
    <property type="match status" value="1"/>
</dbReference>
<dbReference type="InterPro" id="IPR054949">
    <property type="entry name" value="HTH_CatM"/>
</dbReference>
<dbReference type="InterPro" id="IPR005119">
    <property type="entry name" value="LysR_subst-bd"/>
</dbReference>
<dbReference type="InterPro" id="IPR000847">
    <property type="entry name" value="Tscrpt_reg_HTH_LysR"/>
</dbReference>
<dbReference type="InterPro" id="IPR036388">
    <property type="entry name" value="WH-like_DNA-bd_sf"/>
</dbReference>
<dbReference type="InterPro" id="IPR036390">
    <property type="entry name" value="WH_DNA-bd_sf"/>
</dbReference>
<dbReference type="NCBIfam" id="NF040710">
    <property type="entry name" value="benzoate_CatM"/>
    <property type="match status" value="1"/>
</dbReference>
<dbReference type="PANTHER" id="PTHR30346:SF17">
    <property type="entry name" value="LYSR FAMILY TRANSCRIPTIONAL REGULATOR"/>
    <property type="match status" value="1"/>
</dbReference>
<dbReference type="PANTHER" id="PTHR30346">
    <property type="entry name" value="TRANSCRIPTIONAL DUAL REGULATOR HCAR-RELATED"/>
    <property type="match status" value="1"/>
</dbReference>
<dbReference type="Pfam" id="PF00126">
    <property type="entry name" value="HTH_1"/>
    <property type="match status" value="1"/>
</dbReference>
<dbReference type="Pfam" id="PF03466">
    <property type="entry name" value="LysR_substrate"/>
    <property type="match status" value="1"/>
</dbReference>
<dbReference type="PRINTS" id="PR00039">
    <property type="entry name" value="HTHLYSR"/>
</dbReference>
<dbReference type="SUPFAM" id="SSF53850">
    <property type="entry name" value="Periplasmic binding protein-like II"/>
    <property type="match status" value="1"/>
</dbReference>
<dbReference type="SUPFAM" id="SSF46785">
    <property type="entry name" value="Winged helix' DNA-binding domain"/>
    <property type="match status" value="1"/>
</dbReference>
<dbReference type="PROSITE" id="PS50931">
    <property type="entry name" value="HTH_LYSR"/>
    <property type="match status" value="1"/>
</dbReference>
<accession>P07774</accession>
<accession>Q43930</accession>
<gene>
    <name type="primary">catM</name>
    <name type="synonym">catR</name>
    <name type="ordered locus">ACIAD1445</name>
</gene>
<reference key="1">
    <citation type="journal article" date="1989" name="J. Bacteriol.">
        <title>Characterization of Acinetobacter calcoaceticus catM, a repressor gene homologous in sequence to transcriptional activator genes.</title>
        <authorList>
            <person name="Neidle E.L."/>
            <person name="Hartnett C."/>
            <person name="Ornston L.N."/>
        </authorList>
    </citation>
    <scope>NUCLEOTIDE SEQUENCE [GENOMIC DNA]</scope>
</reference>
<reference key="2">
    <citation type="journal article" date="1995" name="J. Bacteriol.">
        <title>catM encodes a LysR-type transcriptional activator regulating catechol degradation in Acinetobacter calcoaceticus.</title>
        <authorList>
            <person name="Romero-Arroyo C.E."/>
            <person name="Schell M.A."/>
            <person name="Gaines G.L. III"/>
            <person name="Neidle E.L."/>
        </authorList>
    </citation>
    <scope>NUCLEOTIDE SEQUENCE [GENOMIC DNA]</scope>
    <scope>SEQUENCE REVISION</scope>
    <scope>FUNCTION</scope>
    <scope>AUTOREGULATION</scope>
</reference>
<reference key="3">
    <citation type="submission" date="1998-03" db="EMBL/GenBank/DDBJ databases">
        <authorList>
            <person name="Collier L.S."/>
            <person name="Neidle E.L."/>
        </authorList>
    </citation>
    <scope>SEQUENCE REVISION TO 274</scope>
</reference>
<reference key="4">
    <citation type="journal article" date="2004" name="Nucleic Acids Res.">
        <title>Unique features revealed by the genome sequence of Acinetobacter sp. ADP1, a versatile and naturally transformation competent bacterium.</title>
        <authorList>
            <person name="Barbe V."/>
            <person name="Vallenet D."/>
            <person name="Fonknechten N."/>
            <person name="Kreimeyer A."/>
            <person name="Oztas S."/>
            <person name="Labarre L."/>
            <person name="Cruveiller S."/>
            <person name="Robert C."/>
            <person name="Duprat S."/>
            <person name="Wincker P."/>
            <person name="Ornston L.N."/>
            <person name="Weissenbach J."/>
            <person name="Marliere P."/>
            <person name="Cohen G.N."/>
            <person name="Medigue C."/>
        </authorList>
    </citation>
    <scope>NUCLEOTIDE SEQUENCE [LARGE SCALE GENOMIC DNA]</scope>
    <source>
        <strain>ATCC 33305 / BD413 / ADP1</strain>
    </source>
</reference>
<reference key="5">
    <citation type="journal article" date="2002" name="Microbiology">
        <title>The benPK operon, proposed to play a role in transport, is part of a regulon for benzoate catabolism in Acinetobacter sp. strain ADP1.</title>
        <authorList>
            <person name="Clark T.J."/>
            <person name="Momany C."/>
            <person name="Neidle E.L."/>
        </authorList>
    </citation>
    <scope>FUNCTION</scope>
    <scope>SUBUNIT</scope>
</reference>
<reference key="6">
    <citation type="journal article" date="2003" name="Appl. Environ. Microbiol.">
        <title>Transcriptional cross-regulation of the catechol and protocatechuate branches of the beta-ketoadipate pathway contributes to carbon source-dependent expression of the Acinetobacter sp. strain ADP1 pobA gene.</title>
        <authorList>
            <person name="Brzostowicz P.C."/>
            <person name="Reams A.B."/>
            <person name="Clark T.J."/>
            <person name="Neidle E.L."/>
        </authorList>
    </citation>
    <scope>FUNCTION</scope>
</reference>
<reference key="7">
    <citation type="journal article" date="2004" name="Acta Crystallogr. D">
        <title>Crystallization of the effector-binding domains of BenM and CatM, LysR-type transcriptional regulators from Acinetobacter sp. ADP1.</title>
        <authorList>
            <person name="Clark T.J."/>
            <person name="Haddad S."/>
            <person name="Neidle E.L."/>
            <person name="Momany C."/>
        </authorList>
    </citation>
    <scope>CRYSTALLIZATION</scope>
</reference>
<reference key="8">
    <citation type="journal article" date="2007" name="J. Mol. Biol.">
        <title>Distinct effector-binding sites enable synergistic transcriptional activation by BenM, a LysR-type regulator.</title>
        <authorList>
            <person name="Ezezika O.C."/>
            <person name="Haddad S."/>
            <person name="Clark T.J."/>
            <person name="Neidle E.L."/>
            <person name="Momany C."/>
        </authorList>
    </citation>
    <scope>X-RAY CRYSTALLOGRAPHY (1.90 ANGSTROMS) OF 81-303 IN COMPLEX WITH CIS,CIS-MUCONATE</scope>
    <scope>FUNCTION</scope>
</reference>
<proteinExistence type="evidence at protein level"/>
<protein>
    <recommendedName>
        <fullName>HTH-type transcriptional regulator CatM</fullName>
    </recommendedName>
    <alternativeName>
        <fullName>Cat operon transcriptional regulator</fullName>
    </alternativeName>
</protein>
<organism>
    <name type="scientific">Acinetobacter baylyi (strain ATCC 33305 / BD413 / ADP1)</name>
    <dbReference type="NCBI Taxonomy" id="62977"/>
    <lineage>
        <taxon>Bacteria</taxon>
        <taxon>Pseudomonadati</taxon>
        <taxon>Pseudomonadota</taxon>
        <taxon>Gammaproteobacteria</taxon>
        <taxon>Moraxellales</taxon>
        <taxon>Moraxellaceae</taxon>
        <taxon>Acinetobacter</taxon>
    </lineage>
</organism>
<sequence>MELRHLRYFVTVVEEQSISKAAEKLCIAQPPLSRQIQKLEEELGIQLFERGFRPAKVTEAGMFFYQHAVQILTHTAQASSMAKRIATVSQTLRIGYVSSLLYGLLPEIIYLFRQQNPEIHIELIECGTKDQINALKQGKIDLGFGRLKITDPAIRRIVLHKEQLKLAIHKHHHLNQFAATGVHLSQIIDEPMLLYPVSQKPNFATFIQSLFTELGLVPSKLTEIREIQLALGLVAAGEGVCIVPASAMDIGVKNLLYIPILDDDAYSPISLAVRNMDHSNYIPKILACVQEVFATHHIRPLIE</sequence>
<evidence type="ECO:0000255" key="1">
    <source>
        <dbReference type="PROSITE-ProRule" id="PRU00253"/>
    </source>
</evidence>
<evidence type="ECO:0000269" key="2">
    <source>
    </source>
</evidence>
<evidence type="ECO:0000269" key="3">
    <source>
    </source>
</evidence>
<evidence type="ECO:0000269" key="4">
    <source>
    </source>
</evidence>
<evidence type="ECO:0000269" key="5">
    <source>
    </source>
</evidence>
<evidence type="ECO:0000305" key="6"/>
<evidence type="ECO:0000305" key="7">
    <source>
    </source>
</evidence>
<evidence type="ECO:0007829" key="8">
    <source>
        <dbReference type="PDB" id="2H98"/>
    </source>
</evidence>
<evidence type="ECO:0007829" key="9">
    <source>
        <dbReference type="PDB" id="3GLB"/>
    </source>
</evidence>
<keyword id="KW-0002">3D-structure</keyword>
<keyword id="KW-0010">Activator</keyword>
<keyword id="KW-0058">Aromatic hydrocarbons catabolism</keyword>
<keyword id="KW-0238">DNA-binding</keyword>
<keyword id="KW-0678">Repressor</keyword>
<keyword id="KW-0804">Transcription</keyword>
<keyword id="KW-0805">Transcription regulation</keyword>
<feature type="chain" id="PRO_0000105599" description="HTH-type transcriptional regulator CatM">
    <location>
        <begin position="1"/>
        <end position="303"/>
    </location>
</feature>
<feature type="domain" description="HTH lysR-type" evidence="1">
    <location>
        <begin position="1"/>
        <end position="58"/>
    </location>
</feature>
<feature type="DNA-binding region" description="H-T-H motif" evidence="1">
    <location>
        <begin position="18"/>
        <end position="37"/>
    </location>
</feature>
<feature type="binding site" evidence="4">
    <location>
        <position position="99"/>
    </location>
    <ligand>
        <name>cis,cis-muconate</name>
        <dbReference type="ChEBI" id="CHEBI:32379"/>
    </ligand>
</feature>
<feature type="binding site" evidence="4">
    <location>
        <position position="128"/>
    </location>
    <ligand>
        <name>cis,cis-muconate</name>
        <dbReference type="ChEBI" id="CHEBI:32379"/>
    </ligand>
</feature>
<feature type="strand" evidence="8">
    <location>
        <begin position="91"/>
        <end position="96"/>
    </location>
</feature>
<feature type="helix" evidence="8">
    <location>
        <begin position="98"/>
        <end position="102"/>
    </location>
</feature>
<feature type="helix" evidence="8">
    <location>
        <begin position="105"/>
        <end position="115"/>
    </location>
</feature>
<feature type="strand" evidence="8">
    <location>
        <begin position="119"/>
        <end position="125"/>
    </location>
</feature>
<feature type="helix" evidence="8">
    <location>
        <begin position="128"/>
        <end position="136"/>
    </location>
</feature>
<feature type="strand" evidence="8">
    <location>
        <begin position="141"/>
        <end position="147"/>
    </location>
</feature>
<feature type="strand" evidence="8">
    <location>
        <begin position="154"/>
        <end position="169"/>
    </location>
</feature>
<feature type="helix" evidence="8">
    <location>
        <begin position="173"/>
        <end position="177"/>
    </location>
</feature>
<feature type="turn" evidence="9">
    <location>
        <begin position="178"/>
        <end position="180"/>
    </location>
</feature>
<feature type="helix" evidence="8">
    <location>
        <begin position="184"/>
        <end position="187"/>
    </location>
</feature>
<feature type="strand" evidence="8">
    <location>
        <begin position="192"/>
        <end position="194"/>
    </location>
</feature>
<feature type="strand" evidence="8">
    <location>
        <begin position="198"/>
        <end position="202"/>
    </location>
</feature>
<feature type="helix" evidence="8">
    <location>
        <begin position="203"/>
        <end position="213"/>
    </location>
</feature>
<feature type="strand" evidence="8">
    <location>
        <begin position="221"/>
        <end position="223"/>
    </location>
</feature>
<feature type="helix" evidence="8">
    <location>
        <begin position="227"/>
        <end position="235"/>
    </location>
</feature>
<feature type="strand" evidence="8">
    <location>
        <begin position="240"/>
        <end position="244"/>
    </location>
</feature>
<feature type="helix" evidence="8">
    <location>
        <begin position="245"/>
        <end position="249"/>
    </location>
</feature>
<feature type="strand" evidence="8">
    <location>
        <begin position="255"/>
        <end position="260"/>
    </location>
</feature>
<feature type="strand" evidence="8">
    <location>
        <begin position="266"/>
        <end position="274"/>
    </location>
</feature>
<feature type="helix" evidence="8">
    <location>
        <begin position="281"/>
        <end position="295"/>
    </location>
</feature>